<evidence type="ECO:0000255" key="1">
    <source>
        <dbReference type="HAMAP-Rule" id="MF_01208"/>
    </source>
</evidence>
<accession>Q57E89</accession>
<gene>
    <name evidence="1" type="primary">pyrE</name>
    <name type="ordered locus">BruAb1_0670</name>
</gene>
<proteinExistence type="inferred from homology"/>
<organism>
    <name type="scientific">Brucella abortus biovar 1 (strain 9-941)</name>
    <dbReference type="NCBI Taxonomy" id="262698"/>
    <lineage>
        <taxon>Bacteria</taxon>
        <taxon>Pseudomonadati</taxon>
        <taxon>Pseudomonadota</taxon>
        <taxon>Alphaproteobacteria</taxon>
        <taxon>Hyphomicrobiales</taxon>
        <taxon>Brucellaceae</taxon>
        <taxon>Brucella/Ochrobactrum group</taxon>
        <taxon>Brucella</taxon>
    </lineage>
</organism>
<sequence>MNTDDVLAVFREAGAILEGHFILTSGLRSPVFLQKARVFMHADKTEKLCKALAEKIRAADLGPIDYVVGPAIGGLIPSYETSRHLGVPSVWVERENGVFRLRRFDVPKGARVVIVEDIVTTGLSIRETIDCMKDLGIEVVAAACIVDRSAGKADVGTRLISLAEYEVPAYPADKLPPELAAIPAVKPGSRNI</sequence>
<keyword id="KW-0328">Glycosyltransferase</keyword>
<keyword id="KW-0460">Magnesium</keyword>
<keyword id="KW-0665">Pyrimidine biosynthesis</keyword>
<keyword id="KW-0808">Transferase</keyword>
<comment type="function">
    <text evidence="1">Catalyzes the transfer of a ribosyl phosphate group from 5-phosphoribose 1-diphosphate to orotate, leading to the formation of orotidine monophosphate (OMP).</text>
</comment>
<comment type="catalytic activity">
    <reaction evidence="1">
        <text>orotidine 5'-phosphate + diphosphate = orotate + 5-phospho-alpha-D-ribose 1-diphosphate</text>
        <dbReference type="Rhea" id="RHEA:10380"/>
        <dbReference type="ChEBI" id="CHEBI:30839"/>
        <dbReference type="ChEBI" id="CHEBI:33019"/>
        <dbReference type="ChEBI" id="CHEBI:57538"/>
        <dbReference type="ChEBI" id="CHEBI:58017"/>
        <dbReference type="EC" id="2.4.2.10"/>
    </reaction>
</comment>
<comment type="cofactor">
    <cofactor evidence="1">
        <name>Mg(2+)</name>
        <dbReference type="ChEBI" id="CHEBI:18420"/>
    </cofactor>
</comment>
<comment type="pathway">
    <text evidence="1">Pyrimidine metabolism; UMP biosynthesis via de novo pathway; UMP from orotate: step 1/2.</text>
</comment>
<comment type="subunit">
    <text evidence="1">Homodimer.</text>
</comment>
<comment type="similarity">
    <text evidence="1">Belongs to the purine/pyrimidine phosphoribosyltransferase family. PyrE subfamily.</text>
</comment>
<dbReference type="EC" id="2.4.2.10" evidence="1"/>
<dbReference type="EMBL" id="AE017223">
    <property type="protein sequence ID" value="AAX74045.1"/>
    <property type="molecule type" value="Genomic_DNA"/>
</dbReference>
<dbReference type="RefSeq" id="WP_002963797.1">
    <property type="nucleotide sequence ID" value="NC_006932.1"/>
</dbReference>
<dbReference type="SMR" id="Q57E89"/>
<dbReference type="EnsemblBacteria" id="AAX74045">
    <property type="protein sequence ID" value="AAX74045"/>
    <property type="gene ID" value="BruAb1_0670"/>
</dbReference>
<dbReference type="GeneID" id="97534018"/>
<dbReference type="KEGG" id="bmb:BruAb1_0670"/>
<dbReference type="HOGENOM" id="CLU_074878_3_0_5"/>
<dbReference type="UniPathway" id="UPA00070">
    <property type="reaction ID" value="UER00119"/>
</dbReference>
<dbReference type="Proteomes" id="UP000000540">
    <property type="component" value="Chromosome I"/>
</dbReference>
<dbReference type="GO" id="GO:0000287">
    <property type="term" value="F:magnesium ion binding"/>
    <property type="evidence" value="ECO:0007669"/>
    <property type="project" value="UniProtKB-UniRule"/>
</dbReference>
<dbReference type="GO" id="GO:0004588">
    <property type="term" value="F:orotate phosphoribosyltransferase activity"/>
    <property type="evidence" value="ECO:0007669"/>
    <property type="project" value="UniProtKB-UniRule"/>
</dbReference>
<dbReference type="GO" id="GO:0044205">
    <property type="term" value="P:'de novo' UMP biosynthetic process"/>
    <property type="evidence" value="ECO:0007669"/>
    <property type="project" value="UniProtKB-UniRule"/>
</dbReference>
<dbReference type="GO" id="GO:0019856">
    <property type="term" value="P:pyrimidine nucleobase biosynthetic process"/>
    <property type="evidence" value="ECO:0007669"/>
    <property type="project" value="InterPro"/>
</dbReference>
<dbReference type="CDD" id="cd06223">
    <property type="entry name" value="PRTases_typeI"/>
    <property type="match status" value="1"/>
</dbReference>
<dbReference type="Gene3D" id="3.40.50.2020">
    <property type="match status" value="1"/>
</dbReference>
<dbReference type="HAMAP" id="MF_01208">
    <property type="entry name" value="PyrE"/>
    <property type="match status" value="1"/>
</dbReference>
<dbReference type="InterPro" id="IPR023031">
    <property type="entry name" value="OPRT"/>
</dbReference>
<dbReference type="InterPro" id="IPR006273">
    <property type="entry name" value="Orotate_PRibTrfase_bac"/>
</dbReference>
<dbReference type="InterPro" id="IPR000836">
    <property type="entry name" value="PRibTrfase_dom"/>
</dbReference>
<dbReference type="InterPro" id="IPR029057">
    <property type="entry name" value="PRTase-like"/>
</dbReference>
<dbReference type="NCBIfam" id="TIGR01367">
    <property type="entry name" value="pyrE_Therm"/>
    <property type="match status" value="1"/>
</dbReference>
<dbReference type="PANTHER" id="PTHR19278">
    <property type="entry name" value="OROTATE PHOSPHORIBOSYLTRANSFERASE"/>
    <property type="match status" value="1"/>
</dbReference>
<dbReference type="PANTHER" id="PTHR19278:SF9">
    <property type="entry name" value="URIDINE 5'-MONOPHOSPHATE SYNTHASE"/>
    <property type="match status" value="1"/>
</dbReference>
<dbReference type="Pfam" id="PF00156">
    <property type="entry name" value="Pribosyltran"/>
    <property type="match status" value="1"/>
</dbReference>
<dbReference type="SUPFAM" id="SSF53271">
    <property type="entry name" value="PRTase-like"/>
    <property type="match status" value="1"/>
</dbReference>
<dbReference type="PROSITE" id="PS00103">
    <property type="entry name" value="PUR_PYR_PR_TRANSFER"/>
    <property type="match status" value="1"/>
</dbReference>
<protein>
    <recommendedName>
        <fullName evidence="1">Orotate phosphoribosyltransferase</fullName>
        <shortName evidence="1">OPRT</shortName>
        <shortName evidence="1">OPRTase</shortName>
        <ecNumber evidence="1">2.4.2.10</ecNumber>
    </recommendedName>
</protein>
<reference key="1">
    <citation type="journal article" date="2005" name="J. Bacteriol.">
        <title>Completion of the genome sequence of Brucella abortus and comparison to the highly similar genomes of Brucella melitensis and Brucella suis.</title>
        <authorList>
            <person name="Halling S.M."/>
            <person name="Peterson-Burch B.D."/>
            <person name="Bricker B.J."/>
            <person name="Zuerner R.L."/>
            <person name="Qing Z."/>
            <person name="Li L.-L."/>
            <person name="Kapur V."/>
            <person name="Alt D.P."/>
            <person name="Olsen S.C."/>
        </authorList>
    </citation>
    <scope>NUCLEOTIDE SEQUENCE [LARGE SCALE GENOMIC DNA]</scope>
    <source>
        <strain>9-941</strain>
    </source>
</reference>
<name>PYRE_BRUAB</name>
<feature type="chain" id="PRO_1000066214" description="Orotate phosphoribosyltransferase">
    <location>
        <begin position="1"/>
        <end position="192"/>
    </location>
</feature>
<feature type="binding site" evidence="1">
    <location>
        <begin position="116"/>
        <end position="124"/>
    </location>
    <ligand>
        <name>5-phospho-alpha-D-ribose 1-diphosphate</name>
        <dbReference type="ChEBI" id="CHEBI:58017"/>
    </ligand>
</feature>
<feature type="binding site" evidence="1">
    <location>
        <position position="120"/>
    </location>
    <ligand>
        <name>orotate</name>
        <dbReference type="ChEBI" id="CHEBI:30839"/>
    </ligand>
</feature>
<feature type="binding site" evidence="1">
    <location>
        <position position="148"/>
    </location>
    <ligand>
        <name>orotate</name>
        <dbReference type="ChEBI" id="CHEBI:30839"/>
    </ligand>
</feature>